<gene>
    <name type="ordered locus">BQ2027_MB2936C</name>
</gene>
<organism>
    <name type="scientific">Mycobacterium bovis (strain ATCC BAA-935 / AF2122/97)</name>
    <dbReference type="NCBI Taxonomy" id="233413"/>
    <lineage>
        <taxon>Bacteria</taxon>
        <taxon>Bacillati</taxon>
        <taxon>Actinomycetota</taxon>
        <taxon>Actinomycetes</taxon>
        <taxon>Mycobacteriales</taxon>
        <taxon>Mycobacteriaceae</taxon>
        <taxon>Mycobacterium</taxon>
        <taxon>Mycobacterium tuberculosis complex</taxon>
    </lineage>
</organism>
<name>Y2936_MYCBO</name>
<feature type="chain" id="PRO_0000070667" description="Uncharacterized HTH-type transcriptional regulator Mb2936c">
    <location>
        <begin position="1"/>
        <end position="195"/>
    </location>
</feature>
<feature type="domain" description="HTH tetR-type" evidence="1">
    <location>
        <begin position="10"/>
        <end position="70"/>
    </location>
</feature>
<feature type="DNA-binding region" description="H-T-H motif" evidence="1">
    <location>
        <begin position="33"/>
        <end position="52"/>
    </location>
</feature>
<dbReference type="EMBL" id="LT708304">
    <property type="protein sequence ID" value="SIU01557.1"/>
    <property type="molecule type" value="Genomic_DNA"/>
</dbReference>
<dbReference type="RefSeq" id="NP_856581.1">
    <property type="nucleotide sequence ID" value="NC_002945.3"/>
</dbReference>
<dbReference type="RefSeq" id="WP_003414739.1">
    <property type="nucleotide sequence ID" value="NC_002945.4"/>
</dbReference>
<dbReference type="SMR" id="P67441"/>
<dbReference type="KEGG" id="mbo:BQ2027_MB2936C"/>
<dbReference type="PATRIC" id="fig|233413.5.peg.3222"/>
<dbReference type="Proteomes" id="UP000001419">
    <property type="component" value="Chromosome"/>
</dbReference>
<dbReference type="GO" id="GO:0003700">
    <property type="term" value="F:DNA-binding transcription factor activity"/>
    <property type="evidence" value="ECO:0007669"/>
    <property type="project" value="TreeGrafter"/>
</dbReference>
<dbReference type="GO" id="GO:0000976">
    <property type="term" value="F:transcription cis-regulatory region binding"/>
    <property type="evidence" value="ECO:0007669"/>
    <property type="project" value="TreeGrafter"/>
</dbReference>
<dbReference type="Gene3D" id="1.10.357.10">
    <property type="entry name" value="Tetracycline Repressor, domain 2"/>
    <property type="match status" value="1"/>
</dbReference>
<dbReference type="InterPro" id="IPR023772">
    <property type="entry name" value="DNA-bd_HTH_TetR-type_CS"/>
</dbReference>
<dbReference type="InterPro" id="IPR009057">
    <property type="entry name" value="Homeodomain-like_sf"/>
</dbReference>
<dbReference type="InterPro" id="IPR050109">
    <property type="entry name" value="HTH-type_TetR-like_transc_reg"/>
</dbReference>
<dbReference type="InterPro" id="IPR001647">
    <property type="entry name" value="HTH_TetR"/>
</dbReference>
<dbReference type="PANTHER" id="PTHR30055:SF234">
    <property type="entry name" value="HTH-TYPE TRANSCRIPTIONAL REGULATOR BETI"/>
    <property type="match status" value="1"/>
</dbReference>
<dbReference type="PANTHER" id="PTHR30055">
    <property type="entry name" value="HTH-TYPE TRANSCRIPTIONAL REGULATOR RUTR"/>
    <property type="match status" value="1"/>
</dbReference>
<dbReference type="Pfam" id="PF00440">
    <property type="entry name" value="TetR_N"/>
    <property type="match status" value="1"/>
</dbReference>
<dbReference type="PRINTS" id="PR00455">
    <property type="entry name" value="HTHTETR"/>
</dbReference>
<dbReference type="SUPFAM" id="SSF46689">
    <property type="entry name" value="Homeodomain-like"/>
    <property type="match status" value="1"/>
</dbReference>
<dbReference type="PROSITE" id="PS01081">
    <property type="entry name" value="HTH_TETR_1"/>
    <property type="match status" value="1"/>
</dbReference>
<dbReference type="PROSITE" id="PS50977">
    <property type="entry name" value="HTH_TETR_2"/>
    <property type="match status" value="1"/>
</dbReference>
<accession>P67441</accession>
<accession>A0A1R3Y2Q1</accession>
<accession>Q10829</accession>
<accession>X2BM59</accession>
<keyword id="KW-0238">DNA-binding</keyword>
<keyword id="KW-1185">Reference proteome</keyword>
<keyword id="KW-0804">Transcription</keyword>
<keyword id="KW-0805">Transcription regulation</keyword>
<protein>
    <recommendedName>
        <fullName>Uncharacterized HTH-type transcriptional regulator Mb2936c</fullName>
    </recommendedName>
</protein>
<proteinExistence type="predicted"/>
<evidence type="ECO:0000255" key="1">
    <source>
        <dbReference type="PROSITE-ProRule" id="PRU00335"/>
    </source>
</evidence>
<sequence>MARTQQQRREETVARLLQASIDTIIEVGYARASAAVITKRAGVSVGALFRHFETMGDFMAATAYEVLRRQLETFTKQVAEIPADRPALPAALTILRDITAGSTNAVLYELMVAARTDEKLKETLQNVLGQYSAKIHDAARALPGAESFPEETFPVIVALMTNVFDGAAIVRGVLPQPELEEQRIPMLTALLTAGL</sequence>
<reference key="1">
    <citation type="journal article" date="2003" name="Proc. Natl. Acad. Sci. U.S.A.">
        <title>The complete genome sequence of Mycobacterium bovis.</title>
        <authorList>
            <person name="Garnier T."/>
            <person name="Eiglmeier K."/>
            <person name="Camus J.-C."/>
            <person name="Medina N."/>
            <person name="Mansoor H."/>
            <person name="Pryor M."/>
            <person name="Duthoy S."/>
            <person name="Grondin S."/>
            <person name="Lacroix C."/>
            <person name="Monsempe C."/>
            <person name="Simon S."/>
            <person name="Harris B."/>
            <person name="Atkin R."/>
            <person name="Doggett J."/>
            <person name="Mayes R."/>
            <person name="Keating L."/>
            <person name="Wheeler P.R."/>
            <person name="Parkhill J."/>
            <person name="Barrell B.G."/>
            <person name="Cole S.T."/>
            <person name="Gordon S.V."/>
            <person name="Hewinson R.G."/>
        </authorList>
    </citation>
    <scope>NUCLEOTIDE SEQUENCE [LARGE SCALE GENOMIC DNA]</scope>
    <source>
        <strain>ATCC BAA-935 / AF2122/97</strain>
    </source>
</reference>
<reference key="2">
    <citation type="journal article" date="2017" name="Genome Announc.">
        <title>Updated reference genome sequence and annotation of Mycobacterium bovis AF2122/97.</title>
        <authorList>
            <person name="Malone K.M."/>
            <person name="Farrell D."/>
            <person name="Stuber T.P."/>
            <person name="Schubert O.T."/>
            <person name="Aebersold R."/>
            <person name="Robbe-Austerman S."/>
            <person name="Gordon S.V."/>
        </authorList>
    </citation>
    <scope>NUCLEOTIDE SEQUENCE [LARGE SCALE GENOMIC DNA]</scope>
    <scope>GENOME REANNOTATION</scope>
    <source>
        <strain>ATCC BAA-935 / AF2122/97</strain>
    </source>
</reference>